<comment type="function">
    <text evidence="1">Required for maturation of 30S ribosomal subunits.</text>
</comment>
<comment type="subcellular location">
    <subcellularLocation>
        <location evidence="1">Cytoplasm</location>
    </subcellularLocation>
</comment>
<comment type="similarity">
    <text evidence="1">Belongs to the RimP family.</text>
</comment>
<proteinExistence type="inferred from homology"/>
<keyword id="KW-0963">Cytoplasm</keyword>
<keyword id="KW-0690">Ribosome biogenesis</keyword>
<protein>
    <recommendedName>
        <fullName evidence="1">Ribosome maturation factor RimP</fullName>
    </recommendedName>
</protein>
<accession>B2K2Q3</accession>
<gene>
    <name evidence="1" type="primary">rimP</name>
    <name type="ordered locus">YPTS_0508</name>
</gene>
<evidence type="ECO:0000255" key="1">
    <source>
        <dbReference type="HAMAP-Rule" id="MF_01077"/>
    </source>
</evidence>
<feature type="chain" id="PRO_0000384811" description="Ribosome maturation factor RimP">
    <location>
        <begin position="1"/>
        <end position="150"/>
    </location>
</feature>
<reference key="1">
    <citation type="submission" date="2008-04" db="EMBL/GenBank/DDBJ databases">
        <title>Complete sequence of Yersinia pseudotuberculosis PB1/+.</title>
        <authorList>
            <person name="Copeland A."/>
            <person name="Lucas S."/>
            <person name="Lapidus A."/>
            <person name="Glavina del Rio T."/>
            <person name="Dalin E."/>
            <person name="Tice H."/>
            <person name="Bruce D."/>
            <person name="Goodwin L."/>
            <person name="Pitluck S."/>
            <person name="Munk A.C."/>
            <person name="Brettin T."/>
            <person name="Detter J.C."/>
            <person name="Han C."/>
            <person name="Tapia R."/>
            <person name="Schmutz J."/>
            <person name="Larimer F."/>
            <person name="Land M."/>
            <person name="Hauser L."/>
            <person name="Challacombe J.F."/>
            <person name="Green L."/>
            <person name="Lindler L.E."/>
            <person name="Nikolich M.P."/>
            <person name="Richardson P."/>
        </authorList>
    </citation>
    <scope>NUCLEOTIDE SEQUENCE [LARGE SCALE GENOMIC DNA]</scope>
    <source>
        <strain>PB1/+</strain>
    </source>
</reference>
<dbReference type="EMBL" id="CP001048">
    <property type="protein sequence ID" value="ACC87494.1"/>
    <property type="molecule type" value="Genomic_DNA"/>
</dbReference>
<dbReference type="RefSeq" id="WP_002222054.1">
    <property type="nucleotide sequence ID" value="NZ_CP009780.1"/>
</dbReference>
<dbReference type="SMR" id="B2K2Q3"/>
<dbReference type="GeneID" id="97457868"/>
<dbReference type="KEGG" id="ypb:YPTS_0508"/>
<dbReference type="PATRIC" id="fig|502801.10.peg.4182"/>
<dbReference type="GO" id="GO:0005829">
    <property type="term" value="C:cytosol"/>
    <property type="evidence" value="ECO:0007669"/>
    <property type="project" value="TreeGrafter"/>
</dbReference>
<dbReference type="GO" id="GO:0000028">
    <property type="term" value="P:ribosomal small subunit assembly"/>
    <property type="evidence" value="ECO:0007669"/>
    <property type="project" value="TreeGrafter"/>
</dbReference>
<dbReference type="GO" id="GO:0006412">
    <property type="term" value="P:translation"/>
    <property type="evidence" value="ECO:0007669"/>
    <property type="project" value="TreeGrafter"/>
</dbReference>
<dbReference type="CDD" id="cd01734">
    <property type="entry name" value="YlxS_C"/>
    <property type="match status" value="1"/>
</dbReference>
<dbReference type="FunFam" id="2.30.30.180:FF:000001">
    <property type="entry name" value="Ribosome maturation factor RimP"/>
    <property type="match status" value="1"/>
</dbReference>
<dbReference type="FunFam" id="3.30.300.70:FF:000001">
    <property type="entry name" value="Ribosome maturation factor RimP"/>
    <property type="match status" value="1"/>
</dbReference>
<dbReference type="Gene3D" id="2.30.30.180">
    <property type="entry name" value="Ribosome maturation factor RimP, C-terminal domain"/>
    <property type="match status" value="1"/>
</dbReference>
<dbReference type="Gene3D" id="3.30.300.70">
    <property type="entry name" value="RimP-like superfamily, N-terminal"/>
    <property type="match status" value="1"/>
</dbReference>
<dbReference type="HAMAP" id="MF_01077">
    <property type="entry name" value="RimP"/>
    <property type="match status" value="1"/>
</dbReference>
<dbReference type="InterPro" id="IPR003728">
    <property type="entry name" value="Ribosome_maturation_RimP"/>
</dbReference>
<dbReference type="InterPro" id="IPR028998">
    <property type="entry name" value="RimP_C"/>
</dbReference>
<dbReference type="InterPro" id="IPR036847">
    <property type="entry name" value="RimP_C_sf"/>
</dbReference>
<dbReference type="InterPro" id="IPR028989">
    <property type="entry name" value="RimP_N"/>
</dbReference>
<dbReference type="InterPro" id="IPR035956">
    <property type="entry name" value="RimP_N_sf"/>
</dbReference>
<dbReference type="NCBIfam" id="NF000927">
    <property type="entry name" value="PRK00092.1-1"/>
    <property type="match status" value="1"/>
</dbReference>
<dbReference type="PANTHER" id="PTHR33867">
    <property type="entry name" value="RIBOSOME MATURATION FACTOR RIMP"/>
    <property type="match status" value="1"/>
</dbReference>
<dbReference type="PANTHER" id="PTHR33867:SF1">
    <property type="entry name" value="RIBOSOME MATURATION FACTOR RIMP"/>
    <property type="match status" value="1"/>
</dbReference>
<dbReference type="Pfam" id="PF17384">
    <property type="entry name" value="DUF150_C"/>
    <property type="match status" value="1"/>
</dbReference>
<dbReference type="Pfam" id="PF02576">
    <property type="entry name" value="RimP_N"/>
    <property type="match status" value="1"/>
</dbReference>
<dbReference type="SUPFAM" id="SSF74942">
    <property type="entry name" value="YhbC-like, C-terminal domain"/>
    <property type="match status" value="1"/>
</dbReference>
<dbReference type="SUPFAM" id="SSF75420">
    <property type="entry name" value="YhbC-like, N-terminal domain"/>
    <property type="match status" value="1"/>
</dbReference>
<sequence length="150" mass="16701">MSTLEQKLTEIISAPVEALGYELVGIEFIRGRQSTLRIYIDSDDGITVDACADVSHQVSAVLDVEDPITVAYNLEVSSPGLDRPMFTAEHYTRYLGEEVTLVLRMAMQNRRKWQGIIKAVDGEMITVTVDGKDEVFALSNIQKANLVPHF</sequence>
<organism>
    <name type="scientific">Yersinia pseudotuberculosis serotype IB (strain PB1/+)</name>
    <dbReference type="NCBI Taxonomy" id="502801"/>
    <lineage>
        <taxon>Bacteria</taxon>
        <taxon>Pseudomonadati</taxon>
        <taxon>Pseudomonadota</taxon>
        <taxon>Gammaproteobacteria</taxon>
        <taxon>Enterobacterales</taxon>
        <taxon>Yersiniaceae</taxon>
        <taxon>Yersinia</taxon>
    </lineage>
</organism>
<name>RIMP_YERPB</name>